<comment type="function">
    <text evidence="1">Involved in the catabolism of homogentisate (2,5-dihydroxyphenylacetate or 2,5-OH-PhAc), a central intermediate in the degradation of phenylalanine and tyrosine. Catalyzes the oxidative ring cleavage of the aromatic ring of homogentisate to yield maleylacetoacetate.</text>
</comment>
<comment type="catalytic activity">
    <reaction evidence="1">
        <text>homogentisate + O2 = 4-maleylacetoacetate + H(+)</text>
        <dbReference type="Rhea" id="RHEA:15449"/>
        <dbReference type="ChEBI" id="CHEBI:15378"/>
        <dbReference type="ChEBI" id="CHEBI:15379"/>
        <dbReference type="ChEBI" id="CHEBI:16169"/>
        <dbReference type="ChEBI" id="CHEBI:17105"/>
        <dbReference type="EC" id="1.13.11.5"/>
    </reaction>
</comment>
<comment type="cofactor">
    <cofactor evidence="1">
        <name>Fe cation</name>
        <dbReference type="ChEBI" id="CHEBI:24875"/>
    </cofactor>
</comment>
<comment type="pathway">
    <text evidence="1">Amino-acid degradation; L-phenylalanine degradation; acetoacetate and fumarate from L-phenylalanine: step 4/6.</text>
</comment>
<comment type="subunit">
    <text evidence="1">Hexamer; dimer of trimers.</text>
</comment>
<comment type="similarity">
    <text evidence="1">Belongs to the homogentisate dioxygenase family.</text>
</comment>
<keyword id="KW-0223">Dioxygenase</keyword>
<keyword id="KW-0408">Iron</keyword>
<keyword id="KW-0479">Metal-binding</keyword>
<keyword id="KW-0560">Oxidoreductase</keyword>
<keyword id="KW-0585">Phenylalanine catabolism</keyword>
<keyword id="KW-0828">Tyrosine catabolism</keyword>
<organism>
    <name type="scientific">Rhizobium johnstonii (strain DSM 114642 / LMG 32736 / 3841)</name>
    <name type="common">Rhizobium leguminosarum bv. viciae</name>
    <dbReference type="NCBI Taxonomy" id="216596"/>
    <lineage>
        <taxon>Bacteria</taxon>
        <taxon>Pseudomonadati</taxon>
        <taxon>Pseudomonadota</taxon>
        <taxon>Alphaproteobacteria</taxon>
        <taxon>Hyphomicrobiales</taxon>
        <taxon>Rhizobiaceae</taxon>
        <taxon>Rhizobium/Agrobacterium group</taxon>
        <taxon>Rhizobium</taxon>
        <taxon>Rhizobium johnstonii</taxon>
    </lineage>
</organism>
<proteinExistence type="inferred from homology"/>
<sequence length="453" mass="50888">MDQTSIQTSDGEAATANTLKYMPGFGNDFETESLPGALPQGQNSPQKCNYGLYAEQLSGSPFTAPRGTNERSWLYRIRPSVRHTRRFSNASYPLWKTAPCLDEHSLPLGQLRWDPIPAPAERLTFLEGVRTITTAGDAATQVGMSAHAYVFNEDMVDDYFFNADGELLIVPQLGAIRVFTEMGIMDVEPLEICLIPRGMMFKILKSGEQTVWRGYICENYGAKFTLPDRGPIGANCLANPRDFKTPVAAFEDKETPCRVHVKWCGKFYVTEIGHSPLDVVAWHGNYAPFKYDLRTFSPVGAIRFDHPDPSIFSVLTAPSEDAGTANVDFVIFPPRWLVAEHTFRPPWYHRNIMSEFMGLIHGQYDAKEEGFVPGGISLHNMMLPHGPDALAFEKASNTELKPVKLDHTMAFMFETRYAQQLTKYAAELETLQDNYLECWDGLERKFDGTPGIK</sequence>
<reference key="1">
    <citation type="journal article" date="2006" name="Genome Biol.">
        <title>The genome of Rhizobium leguminosarum has recognizable core and accessory components.</title>
        <authorList>
            <person name="Young J.P.W."/>
            <person name="Crossman L.C."/>
            <person name="Johnston A.W.B."/>
            <person name="Thomson N.R."/>
            <person name="Ghazoui Z.F."/>
            <person name="Hull K.H."/>
            <person name="Wexler M."/>
            <person name="Curson A.R.J."/>
            <person name="Todd J.D."/>
            <person name="Poole P.S."/>
            <person name="Mauchline T.H."/>
            <person name="East A.K."/>
            <person name="Quail M.A."/>
            <person name="Churcher C."/>
            <person name="Arrowsmith C."/>
            <person name="Cherevach I."/>
            <person name="Chillingworth T."/>
            <person name="Clarke K."/>
            <person name="Cronin A."/>
            <person name="Davis P."/>
            <person name="Fraser A."/>
            <person name="Hance Z."/>
            <person name="Hauser H."/>
            <person name="Jagels K."/>
            <person name="Moule S."/>
            <person name="Mungall K."/>
            <person name="Norbertczak H."/>
            <person name="Rabbinowitsch E."/>
            <person name="Sanders M."/>
            <person name="Simmonds M."/>
            <person name="Whitehead S."/>
            <person name="Parkhill J."/>
        </authorList>
    </citation>
    <scope>NUCLEOTIDE SEQUENCE [LARGE SCALE GENOMIC DNA]</scope>
    <source>
        <strain>DSM 114642 / LMG 32736 / 3841</strain>
    </source>
</reference>
<name>HGD_RHIJ3</name>
<dbReference type="EC" id="1.13.11.5" evidence="1"/>
<dbReference type="EMBL" id="AM236080">
    <property type="protein sequence ID" value="CAK07358.1"/>
    <property type="molecule type" value="Genomic_DNA"/>
</dbReference>
<dbReference type="RefSeq" id="WP_011651486.1">
    <property type="nucleotide sequence ID" value="NC_008380.1"/>
</dbReference>
<dbReference type="SMR" id="Q1MI52"/>
<dbReference type="EnsemblBacteria" id="CAK07358">
    <property type="protein sequence ID" value="CAK07358"/>
    <property type="gene ID" value="RL1864"/>
</dbReference>
<dbReference type="KEGG" id="rle:RL1864"/>
<dbReference type="eggNOG" id="COG3508">
    <property type="taxonomic scope" value="Bacteria"/>
</dbReference>
<dbReference type="HOGENOM" id="CLU_027174_0_0_5"/>
<dbReference type="UniPathway" id="UPA00139">
    <property type="reaction ID" value="UER00339"/>
</dbReference>
<dbReference type="Proteomes" id="UP000006575">
    <property type="component" value="Chromosome"/>
</dbReference>
<dbReference type="GO" id="GO:0005737">
    <property type="term" value="C:cytoplasm"/>
    <property type="evidence" value="ECO:0007669"/>
    <property type="project" value="TreeGrafter"/>
</dbReference>
<dbReference type="GO" id="GO:0004411">
    <property type="term" value="F:homogentisate 1,2-dioxygenase activity"/>
    <property type="evidence" value="ECO:0007669"/>
    <property type="project" value="UniProtKB-UniRule"/>
</dbReference>
<dbReference type="GO" id="GO:0005506">
    <property type="term" value="F:iron ion binding"/>
    <property type="evidence" value="ECO:0007669"/>
    <property type="project" value="UniProtKB-UniRule"/>
</dbReference>
<dbReference type="GO" id="GO:0006559">
    <property type="term" value="P:L-phenylalanine catabolic process"/>
    <property type="evidence" value="ECO:0007669"/>
    <property type="project" value="UniProtKB-UniRule"/>
</dbReference>
<dbReference type="GO" id="GO:0006572">
    <property type="term" value="P:tyrosine catabolic process"/>
    <property type="evidence" value="ECO:0007669"/>
    <property type="project" value="UniProtKB-UniRule"/>
</dbReference>
<dbReference type="CDD" id="cd07000">
    <property type="entry name" value="cupin_HGO_N"/>
    <property type="match status" value="1"/>
</dbReference>
<dbReference type="FunFam" id="2.60.120.10:FF:000053">
    <property type="entry name" value="Homogentisate 1,2-dioxygenase"/>
    <property type="match status" value="1"/>
</dbReference>
<dbReference type="Gene3D" id="2.60.120.10">
    <property type="entry name" value="Jelly Rolls"/>
    <property type="match status" value="1"/>
</dbReference>
<dbReference type="HAMAP" id="MF_00334">
    <property type="entry name" value="Homogentis_dioxygen"/>
    <property type="match status" value="1"/>
</dbReference>
<dbReference type="InterPro" id="IPR046451">
    <property type="entry name" value="HgmA_C"/>
</dbReference>
<dbReference type="InterPro" id="IPR046452">
    <property type="entry name" value="HgmA_N"/>
</dbReference>
<dbReference type="InterPro" id="IPR005708">
    <property type="entry name" value="Homogentis_dOase"/>
</dbReference>
<dbReference type="InterPro" id="IPR022950">
    <property type="entry name" value="Homogentis_dOase_bac"/>
</dbReference>
<dbReference type="InterPro" id="IPR014710">
    <property type="entry name" value="RmlC-like_jellyroll"/>
</dbReference>
<dbReference type="InterPro" id="IPR011051">
    <property type="entry name" value="RmlC_Cupin_sf"/>
</dbReference>
<dbReference type="NCBIfam" id="TIGR01015">
    <property type="entry name" value="hmgA"/>
    <property type="match status" value="1"/>
</dbReference>
<dbReference type="PANTHER" id="PTHR11056">
    <property type="entry name" value="HOMOGENTISATE 1,2-DIOXYGENASE"/>
    <property type="match status" value="1"/>
</dbReference>
<dbReference type="PANTHER" id="PTHR11056:SF0">
    <property type="entry name" value="HOMOGENTISATE 1,2-DIOXYGENASE"/>
    <property type="match status" value="1"/>
</dbReference>
<dbReference type="Pfam" id="PF04209">
    <property type="entry name" value="HgmA_C"/>
    <property type="match status" value="1"/>
</dbReference>
<dbReference type="Pfam" id="PF20510">
    <property type="entry name" value="HgmA_N"/>
    <property type="match status" value="1"/>
</dbReference>
<dbReference type="SUPFAM" id="SSF51182">
    <property type="entry name" value="RmlC-like cupins"/>
    <property type="match status" value="1"/>
</dbReference>
<accession>Q1MI52</accession>
<protein>
    <recommendedName>
        <fullName evidence="1">Homogentisate 1,2-dioxygenase</fullName>
        <shortName evidence="1">HGDO</shortName>
        <ecNumber evidence="1">1.13.11.5</ecNumber>
    </recommendedName>
    <alternativeName>
        <fullName evidence="1">Homogentisate oxygenase</fullName>
    </alternativeName>
    <alternativeName>
        <fullName evidence="1">Homogentisic acid oxidase</fullName>
    </alternativeName>
    <alternativeName>
        <fullName evidence="1">Homogentisicase</fullName>
    </alternativeName>
</protein>
<feature type="chain" id="PRO_1000019539" description="Homogentisate 1,2-dioxygenase">
    <location>
        <begin position="1"/>
        <end position="453"/>
    </location>
</feature>
<feature type="active site" description="Proton acceptor" evidence="1">
    <location>
        <position position="306"/>
    </location>
</feature>
<feature type="binding site" evidence="1">
    <location>
        <position position="349"/>
    </location>
    <ligand>
        <name>Fe cation</name>
        <dbReference type="ChEBI" id="CHEBI:24875"/>
    </ligand>
</feature>
<feature type="binding site" evidence="1">
    <location>
        <position position="355"/>
    </location>
    <ligand>
        <name>Fe cation</name>
        <dbReference type="ChEBI" id="CHEBI:24875"/>
    </ligand>
</feature>
<feature type="binding site" evidence="1">
    <location>
        <position position="364"/>
    </location>
    <ligand>
        <name>homogentisate</name>
        <dbReference type="ChEBI" id="CHEBI:16169"/>
    </ligand>
</feature>
<feature type="binding site" evidence="1">
    <location>
        <position position="385"/>
    </location>
    <ligand>
        <name>Fe cation</name>
        <dbReference type="ChEBI" id="CHEBI:24875"/>
    </ligand>
</feature>
<feature type="binding site" evidence="1">
    <location>
        <position position="385"/>
    </location>
    <ligand>
        <name>homogentisate</name>
        <dbReference type="ChEBI" id="CHEBI:16169"/>
    </ligand>
</feature>
<gene>
    <name evidence="1" type="primary">hmgA</name>
    <name type="ordered locus">RL1864</name>
</gene>
<evidence type="ECO:0000255" key="1">
    <source>
        <dbReference type="HAMAP-Rule" id="MF_00334"/>
    </source>
</evidence>